<reference key="1">
    <citation type="journal article" date="2002" name="Nature">
        <title>The genome sequence of Schizosaccharomyces pombe.</title>
        <authorList>
            <person name="Wood V."/>
            <person name="Gwilliam R."/>
            <person name="Rajandream M.A."/>
            <person name="Lyne M.H."/>
            <person name="Lyne R."/>
            <person name="Stewart A."/>
            <person name="Sgouros J.G."/>
            <person name="Peat N."/>
            <person name="Hayles J."/>
            <person name="Baker S.G."/>
            <person name="Basham D."/>
            <person name="Bowman S."/>
            <person name="Brooks K."/>
            <person name="Brown D."/>
            <person name="Brown S."/>
            <person name="Chillingworth T."/>
            <person name="Churcher C.M."/>
            <person name="Collins M."/>
            <person name="Connor R."/>
            <person name="Cronin A."/>
            <person name="Davis P."/>
            <person name="Feltwell T."/>
            <person name="Fraser A."/>
            <person name="Gentles S."/>
            <person name="Goble A."/>
            <person name="Hamlin N."/>
            <person name="Harris D.E."/>
            <person name="Hidalgo J."/>
            <person name="Hodgson G."/>
            <person name="Holroyd S."/>
            <person name="Hornsby T."/>
            <person name="Howarth S."/>
            <person name="Huckle E.J."/>
            <person name="Hunt S."/>
            <person name="Jagels K."/>
            <person name="James K.D."/>
            <person name="Jones L."/>
            <person name="Jones M."/>
            <person name="Leather S."/>
            <person name="McDonald S."/>
            <person name="McLean J."/>
            <person name="Mooney P."/>
            <person name="Moule S."/>
            <person name="Mungall K.L."/>
            <person name="Murphy L.D."/>
            <person name="Niblett D."/>
            <person name="Odell C."/>
            <person name="Oliver K."/>
            <person name="O'Neil S."/>
            <person name="Pearson D."/>
            <person name="Quail M.A."/>
            <person name="Rabbinowitsch E."/>
            <person name="Rutherford K.M."/>
            <person name="Rutter S."/>
            <person name="Saunders D."/>
            <person name="Seeger K."/>
            <person name="Sharp S."/>
            <person name="Skelton J."/>
            <person name="Simmonds M.N."/>
            <person name="Squares R."/>
            <person name="Squares S."/>
            <person name="Stevens K."/>
            <person name="Taylor K."/>
            <person name="Taylor R.G."/>
            <person name="Tivey A."/>
            <person name="Walsh S.V."/>
            <person name="Warren T."/>
            <person name="Whitehead S."/>
            <person name="Woodward J.R."/>
            <person name="Volckaert G."/>
            <person name="Aert R."/>
            <person name="Robben J."/>
            <person name="Grymonprez B."/>
            <person name="Weltjens I."/>
            <person name="Vanstreels E."/>
            <person name="Rieger M."/>
            <person name="Schaefer M."/>
            <person name="Mueller-Auer S."/>
            <person name="Gabel C."/>
            <person name="Fuchs M."/>
            <person name="Duesterhoeft A."/>
            <person name="Fritzc C."/>
            <person name="Holzer E."/>
            <person name="Moestl D."/>
            <person name="Hilbert H."/>
            <person name="Borzym K."/>
            <person name="Langer I."/>
            <person name="Beck A."/>
            <person name="Lehrach H."/>
            <person name="Reinhardt R."/>
            <person name="Pohl T.M."/>
            <person name="Eger P."/>
            <person name="Zimmermann W."/>
            <person name="Wedler H."/>
            <person name="Wambutt R."/>
            <person name="Purnelle B."/>
            <person name="Goffeau A."/>
            <person name="Cadieu E."/>
            <person name="Dreano S."/>
            <person name="Gloux S."/>
            <person name="Lelaure V."/>
            <person name="Mottier S."/>
            <person name="Galibert F."/>
            <person name="Aves S.J."/>
            <person name="Xiang Z."/>
            <person name="Hunt C."/>
            <person name="Moore K."/>
            <person name="Hurst S.M."/>
            <person name="Lucas M."/>
            <person name="Rochet M."/>
            <person name="Gaillardin C."/>
            <person name="Tallada V.A."/>
            <person name="Garzon A."/>
            <person name="Thode G."/>
            <person name="Daga R.R."/>
            <person name="Cruzado L."/>
            <person name="Jimenez J."/>
            <person name="Sanchez M."/>
            <person name="del Rey F."/>
            <person name="Benito J."/>
            <person name="Dominguez A."/>
            <person name="Revuelta J.L."/>
            <person name="Moreno S."/>
            <person name="Armstrong J."/>
            <person name="Forsburg S.L."/>
            <person name="Cerutti L."/>
            <person name="Lowe T."/>
            <person name="McCombie W.R."/>
            <person name="Paulsen I."/>
            <person name="Potashkin J."/>
            <person name="Shpakovski G.V."/>
            <person name="Ussery D."/>
            <person name="Barrell B.G."/>
            <person name="Nurse P."/>
        </authorList>
    </citation>
    <scope>NUCLEOTIDE SEQUENCE [LARGE SCALE GENOMIC DNA]</scope>
    <source>
        <strain>972 / ATCC 24843</strain>
    </source>
</reference>
<reference key="2">
    <citation type="journal article" date="1995" name="Curr. Genet.">
        <title>As in Saccharomyces cerevisiae, aspartate transcarbamoylase is assembled on a multifunctional protein including a dihydroorotase-like cryptic domain in Schizosaccharomyces pombe.</title>
        <authorList>
            <person name="Lollier M."/>
            <person name="Jaquet L."/>
            <person name="Nedeva T."/>
            <person name="Lacroute F."/>
            <person name="Potier S."/>
            <person name="Souciet J.-L."/>
        </authorList>
    </citation>
    <scope>NUCLEOTIDE SEQUENCE [MRNA] OF 22-2244</scope>
    <scope>FUNCTION</scope>
    <scope>CATALYTIC ACTIVITY</scope>
    <scope>PATHWAY</scope>
    <scope>DOMAIN</scope>
    <scope>ACTIVITY REGULATION</scope>
    <source>
        <strain>972 / ATCC 24843</strain>
    </source>
</reference>
<reference key="3">
    <citation type="journal article" date="1985" name="Curr. Genet.">
        <title>Genetical evidence of carbamoylphosphate compartmentation in Schizosaccharomyces pombe and Schizosaccharomyces japonicus.</title>
        <authorList>
            <person name="Vissers S."/>
            <person name="Thuriaux P."/>
        </authorList>
    </citation>
    <scope>FUNCTION</scope>
</reference>
<reference key="4">
    <citation type="journal article" date="1994" name="Adv. Exp. Med. Biol.">
        <title>Evolution of the GATase, CPSase, DHOase-like, ATCase multifunctional protein in eukaryotes: genetic and molecular approaches with yeasts S. cerevisiae and S. pombe.</title>
        <authorList>
            <person name="Lollier M."/>
            <person name="Jaquet L."/>
            <person name="Nedeva T."/>
            <person name="Lacroute F."/>
            <person name="Potier S."/>
            <person name="Souciet J.L."/>
        </authorList>
    </citation>
    <scope>DOMAIN</scope>
</reference>
<reference key="5">
    <citation type="journal article" date="2008" name="J. Proteome Res.">
        <title>Phosphoproteome analysis of fission yeast.</title>
        <authorList>
            <person name="Wilson-Grady J.T."/>
            <person name="Villen J."/>
            <person name="Gygi S.P."/>
        </authorList>
    </citation>
    <scope>PHOSPHORYLATION [LARGE SCALE ANALYSIS] AT SER-1119; SER-1881 AND SER-1885</scope>
    <scope>IDENTIFICATION BY MASS SPECTROMETRY</scope>
</reference>
<gene>
    <name type="primary">ura1</name>
    <name type="ORF">SPAC22G7.06c</name>
</gene>
<proteinExistence type="evidence at protein level"/>
<feature type="chain" id="PRO_0000199510" description="Multifunctional protein ura1">
    <location>
        <begin position="1"/>
        <end position="2244"/>
    </location>
</feature>
<feature type="domain" description="Glutamine amidotransferase type-1" evidence="7">
    <location>
        <begin position="264"/>
        <end position="449"/>
    </location>
</feature>
<feature type="domain" description="ATP-grasp 1" evidence="6">
    <location>
        <begin position="598"/>
        <end position="790"/>
    </location>
</feature>
<feature type="domain" description="ATP-grasp 2" evidence="6">
    <location>
        <begin position="1133"/>
        <end position="1324"/>
    </location>
</feature>
<feature type="domain" description="MGS-like" evidence="8">
    <location>
        <begin position="1390"/>
        <end position="1552"/>
    </location>
</feature>
<feature type="region of interest" description="GATase (Glutamine amidotransferase)" evidence="14">
    <location>
        <begin position="1"/>
        <end position="437"/>
    </location>
</feature>
<feature type="region of interest" description="Disordered" evidence="9">
    <location>
        <begin position="16"/>
        <end position="44"/>
    </location>
</feature>
<feature type="region of interest" description="Linker" evidence="14">
    <location>
        <begin position="438"/>
        <end position="477"/>
    </location>
</feature>
<feature type="region of interest" description="CPSase (Carbamoyl phosphate synthase)" evidence="14">
    <location>
        <begin position="478"/>
        <end position="1514"/>
    </location>
</feature>
<feature type="region of interest" description="CPSase A" evidence="3">
    <location>
        <begin position="478"/>
        <end position="1014"/>
    </location>
</feature>
<feature type="region of interest" description="CPSase B" evidence="3">
    <location>
        <begin position="1015"/>
        <end position="1514"/>
    </location>
</feature>
<feature type="region of interest" description="Linker" evidence="14">
    <location>
        <begin position="1515"/>
        <end position="1524"/>
    </location>
</feature>
<feature type="region of interest" description="Defective DHOase domain" evidence="14">
    <location>
        <begin position="1525"/>
        <end position="1853"/>
    </location>
</feature>
<feature type="region of interest" description="Linker" evidence="14">
    <location>
        <begin position="1854"/>
        <end position="1935"/>
    </location>
</feature>
<feature type="region of interest" description="ATCase (Aspartate transcarbamylase)" evidence="14">
    <location>
        <begin position="1936"/>
        <end position="2244"/>
    </location>
</feature>
<feature type="active site" description="Nucleophile; for GATase activity" evidence="7">
    <location>
        <position position="338"/>
    </location>
</feature>
<feature type="active site" description="For GATase activity" evidence="7">
    <location>
        <position position="422"/>
    </location>
</feature>
<feature type="active site" description="For GATase activity" evidence="7">
    <location>
        <position position="424"/>
    </location>
</feature>
<feature type="binding site" evidence="4">
    <location>
        <position position="101"/>
    </location>
    <ligand>
        <name>L-glutamine</name>
        <dbReference type="ChEBI" id="CHEBI:58359"/>
    </ligand>
</feature>
<feature type="binding site" evidence="4">
    <location>
        <position position="309"/>
    </location>
    <ligand>
        <name>L-glutamine</name>
        <dbReference type="ChEBI" id="CHEBI:58359"/>
    </ligand>
</feature>
<feature type="binding site" evidence="4">
    <location>
        <position position="311"/>
    </location>
    <ligand>
        <name>L-glutamine</name>
        <dbReference type="ChEBI" id="CHEBI:58359"/>
    </ligand>
</feature>
<feature type="binding site" evidence="4">
    <location>
        <position position="342"/>
    </location>
    <ligand>
        <name>L-glutamine</name>
        <dbReference type="ChEBI" id="CHEBI:58359"/>
    </ligand>
</feature>
<feature type="binding site" evidence="4">
    <location>
        <position position="380"/>
    </location>
    <ligand>
        <name>L-glutamine</name>
        <dbReference type="ChEBI" id="CHEBI:58359"/>
    </ligand>
</feature>
<feature type="binding site" evidence="4">
    <location>
        <position position="382"/>
    </location>
    <ligand>
        <name>L-glutamine</name>
        <dbReference type="ChEBI" id="CHEBI:58359"/>
    </ligand>
</feature>
<feature type="binding site" evidence="4">
    <location>
        <position position="383"/>
    </location>
    <ligand>
        <name>L-glutamine</name>
        <dbReference type="ChEBI" id="CHEBI:58359"/>
    </ligand>
</feature>
<feature type="binding site" evidence="1">
    <location>
        <position position="594"/>
    </location>
    <ligand>
        <name>ATP</name>
        <dbReference type="ChEBI" id="CHEBI:30616"/>
        <label>1</label>
    </ligand>
</feature>
<feature type="binding site" evidence="1">
    <location>
        <position position="634"/>
    </location>
    <ligand>
        <name>ATP</name>
        <dbReference type="ChEBI" id="CHEBI:30616"/>
        <label>1</label>
    </ligand>
</feature>
<feature type="binding site" evidence="1">
    <location>
        <position position="640"/>
    </location>
    <ligand>
        <name>ATP</name>
        <dbReference type="ChEBI" id="CHEBI:30616"/>
        <label>1</label>
    </ligand>
</feature>
<feature type="binding site" evidence="1">
    <location>
        <position position="641"/>
    </location>
    <ligand>
        <name>ATP</name>
        <dbReference type="ChEBI" id="CHEBI:30616"/>
        <label>1</label>
    </ligand>
</feature>
<feature type="binding site" evidence="1">
    <location>
        <position position="671"/>
    </location>
    <ligand>
        <name>ATP</name>
        <dbReference type="ChEBI" id="CHEBI:30616"/>
        <label>1</label>
    </ligand>
</feature>
<feature type="binding site" evidence="1">
    <location>
        <position position="673"/>
    </location>
    <ligand>
        <name>ATP</name>
        <dbReference type="ChEBI" id="CHEBI:30616"/>
        <label>1</label>
    </ligand>
</feature>
<feature type="binding site" evidence="1">
    <location>
        <position position="678"/>
    </location>
    <ligand>
        <name>ATP</name>
        <dbReference type="ChEBI" id="CHEBI:30616"/>
        <label>1</label>
    </ligand>
</feature>
<feature type="binding site" evidence="1">
    <location>
        <position position="704"/>
    </location>
    <ligand>
        <name>ATP</name>
        <dbReference type="ChEBI" id="CHEBI:30616"/>
        <label>1</label>
    </ligand>
</feature>
<feature type="binding site" evidence="1">
    <location>
        <position position="705"/>
    </location>
    <ligand>
        <name>ATP</name>
        <dbReference type="ChEBI" id="CHEBI:30616"/>
        <label>1</label>
    </ligand>
</feature>
<feature type="binding site" evidence="1">
    <location>
        <position position="706"/>
    </location>
    <ligand>
        <name>ATP</name>
        <dbReference type="ChEBI" id="CHEBI:30616"/>
        <label>1</label>
    </ligand>
</feature>
<feature type="binding site" evidence="1">
    <location>
        <position position="747"/>
    </location>
    <ligand>
        <name>ATP</name>
        <dbReference type="ChEBI" id="CHEBI:30616"/>
        <label>1</label>
    </ligand>
</feature>
<feature type="binding site" evidence="6">
    <location>
        <position position="747"/>
    </location>
    <ligand>
        <name>Mg(2+)</name>
        <dbReference type="ChEBI" id="CHEBI:18420"/>
        <label>1</label>
    </ligand>
</feature>
<feature type="binding site" evidence="6">
    <location>
        <position position="747"/>
    </location>
    <ligand>
        <name>Mn(2+)</name>
        <dbReference type="ChEBI" id="CHEBI:29035"/>
        <label>1</label>
    </ligand>
</feature>
<feature type="binding site" evidence="1">
    <location>
        <position position="761"/>
    </location>
    <ligand>
        <name>ATP</name>
        <dbReference type="ChEBI" id="CHEBI:30616"/>
        <label>1</label>
    </ligand>
</feature>
<feature type="binding site" evidence="6">
    <location>
        <position position="761"/>
    </location>
    <ligand>
        <name>Mg(2+)</name>
        <dbReference type="ChEBI" id="CHEBI:18420"/>
        <label>1</label>
    </ligand>
</feature>
<feature type="binding site" evidence="6">
    <location>
        <position position="761"/>
    </location>
    <ligand>
        <name>Mg(2+)</name>
        <dbReference type="ChEBI" id="CHEBI:18420"/>
        <label>2</label>
    </ligand>
</feature>
<feature type="binding site" evidence="6">
    <location>
        <position position="761"/>
    </location>
    <ligand>
        <name>Mn(2+)</name>
        <dbReference type="ChEBI" id="CHEBI:29035"/>
        <label>1</label>
    </ligand>
</feature>
<feature type="binding site" evidence="6">
    <location>
        <position position="761"/>
    </location>
    <ligand>
        <name>Mn(2+)</name>
        <dbReference type="ChEBI" id="CHEBI:29035"/>
        <label>2</label>
    </ligand>
</feature>
<feature type="binding site" evidence="6">
    <location>
        <position position="763"/>
    </location>
    <ligand>
        <name>Mg(2+)</name>
        <dbReference type="ChEBI" id="CHEBI:18420"/>
        <label>2</label>
    </ligand>
</feature>
<feature type="binding site" evidence="6">
    <location>
        <position position="763"/>
    </location>
    <ligand>
        <name>Mn(2+)</name>
        <dbReference type="ChEBI" id="CHEBI:29035"/>
        <label>2</label>
    </ligand>
</feature>
<feature type="binding site" evidence="1">
    <location>
        <position position="1169"/>
    </location>
    <ligand>
        <name>ATP</name>
        <dbReference type="ChEBI" id="CHEBI:30616"/>
        <label>2</label>
    </ligand>
</feature>
<feature type="binding site" evidence="1">
    <location>
        <position position="1208"/>
    </location>
    <ligand>
        <name>ATP</name>
        <dbReference type="ChEBI" id="CHEBI:30616"/>
        <label>2</label>
    </ligand>
</feature>
<feature type="binding site" evidence="1">
    <location>
        <position position="1210"/>
    </location>
    <ligand>
        <name>ATP</name>
        <dbReference type="ChEBI" id="CHEBI:30616"/>
        <label>2</label>
    </ligand>
</feature>
<feature type="binding site" evidence="1">
    <location>
        <position position="1215"/>
    </location>
    <ligand>
        <name>ATP</name>
        <dbReference type="ChEBI" id="CHEBI:30616"/>
        <label>2</label>
    </ligand>
</feature>
<feature type="binding site" evidence="1">
    <location>
        <position position="1240"/>
    </location>
    <ligand>
        <name>ATP</name>
        <dbReference type="ChEBI" id="CHEBI:30616"/>
        <label>2</label>
    </ligand>
</feature>
<feature type="binding site" evidence="1">
    <location>
        <position position="1241"/>
    </location>
    <ligand>
        <name>ATP</name>
        <dbReference type="ChEBI" id="CHEBI:30616"/>
        <label>2</label>
    </ligand>
</feature>
<feature type="binding site" evidence="1">
    <location>
        <position position="1242"/>
    </location>
    <ligand>
        <name>ATP</name>
        <dbReference type="ChEBI" id="CHEBI:30616"/>
        <label>2</label>
    </ligand>
</feature>
<feature type="binding site" evidence="1">
    <location>
        <position position="1243"/>
    </location>
    <ligand>
        <name>ATP</name>
        <dbReference type="ChEBI" id="CHEBI:30616"/>
        <label>2</label>
    </ligand>
</feature>
<feature type="binding site" evidence="1">
    <location>
        <position position="1283"/>
    </location>
    <ligand>
        <name>ATP</name>
        <dbReference type="ChEBI" id="CHEBI:30616"/>
        <label>2</label>
    </ligand>
</feature>
<feature type="binding site" evidence="6">
    <location>
        <position position="1283"/>
    </location>
    <ligand>
        <name>Mg(2+)</name>
        <dbReference type="ChEBI" id="CHEBI:18420"/>
        <label>3</label>
    </ligand>
</feature>
<feature type="binding site" evidence="6">
    <location>
        <position position="1283"/>
    </location>
    <ligand>
        <name>Mn(2+)</name>
        <dbReference type="ChEBI" id="CHEBI:29035"/>
        <label>3</label>
    </ligand>
</feature>
<feature type="binding site" evidence="1">
    <location>
        <position position="1295"/>
    </location>
    <ligand>
        <name>ATP</name>
        <dbReference type="ChEBI" id="CHEBI:30616"/>
        <label>2</label>
    </ligand>
</feature>
<feature type="binding site" evidence="6">
    <location>
        <position position="1295"/>
    </location>
    <ligand>
        <name>Mg(2+)</name>
        <dbReference type="ChEBI" id="CHEBI:18420"/>
        <label>3</label>
    </ligand>
</feature>
<feature type="binding site" evidence="6">
    <location>
        <position position="1295"/>
    </location>
    <ligand>
        <name>Mg(2+)</name>
        <dbReference type="ChEBI" id="CHEBI:18420"/>
        <label>4</label>
    </ligand>
</feature>
<feature type="binding site" evidence="6">
    <location>
        <position position="1295"/>
    </location>
    <ligand>
        <name>Mn(2+)</name>
        <dbReference type="ChEBI" id="CHEBI:29035"/>
        <label>3</label>
    </ligand>
</feature>
<feature type="binding site" evidence="6">
    <location>
        <position position="1295"/>
    </location>
    <ligand>
        <name>Mn(2+)</name>
        <dbReference type="ChEBI" id="CHEBI:29035"/>
        <label>4</label>
    </ligand>
</feature>
<feature type="binding site" evidence="6">
    <location>
        <position position="1297"/>
    </location>
    <ligand>
        <name>Mg(2+)</name>
        <dbReference type="ChEBI" id="CHEBI:18420"/>
        <label>4</label>
    </ligand>
</feature>
<feature type="binding site" evidence="6">
    <location>
        <position position="1297"/>
    </location>
    <ligand>
        <name>Mn(2+)</name>
        <dbReference type="ChEBI" id="CHEBI:29035"/>
        <label>4</label>
    </ligand>
</feature>
<feature type="binding site" evidence="5">
    <location>
        <position position="1988"/>
    </location>
    <ligand>
        <name>carbamoyl phosphate</name>
        <dbReference type="ChEBI" id="CHEBI:58228"/>
    </ligand>
</feature>
<feature type="binding site" evidence="5">
    <location>
        <position position="1989"/>
    </location>
    <ligand>
        <name>carbamoyl phosphate</name>
        <dbReference type="ChEBI" id="CHEBI:58228"/>
    </ligand>
</feature>
<feature type="binding site" evidence="5">
    <location>
        <position position="2016"/>
    </location>
    <ligand>
        <name>L-aspartate</name>
        <dbReference type="ChEBI" id="CHEBI:29991"/>
    </ligand>
</feature>
<feature type="binding site" evidence="5">
    <location>
        <position position="2037"/>
    </location>
    <ligand>
        <name>carbamoyl phosphate</name>
        <dbReference type="ChEBI" id="CHEBI:58228"/>
    </ligand>
</feature>
<feature type="binding site" evidence="5">
    <location>
        <position position="2065"/>
    </location>
    <ligand>
        <name>carbamoyl phosphate</name>
        <dbReference type="ChEBI" id="CHEBI:58228"/>
    </ligand>
</feature>
<feature type="binding site" evidence="5">
    <location>
        <position position="2068"/>
    </location>
    <ligand>
        <name>carbamoyl phosphate</name>
        <dbReference type="ChEBI" id="CHEBI:58228"/>
    </ligand>
</feature>
<feature type="binding site" evidence="5">
    <location>
        <position position="2098"/>
    </location>
    <ligand>
        <name>L-aspartate</name>
        <dbReference type="ChEBI" id="CHEBI:29991"/>
    </ligand>
</feature>
<feature type="binding site" evidence="5">
    <location>
        <position position="2160"/>
    </location>
    <ligand>
        <name>L-aspartate</name>
        <dbReference type="ChEBI" id="CHEBI:29991"/>
    </ligand>
</feature>
<feature type="binding site" evidence="5">
    <location>
        <position position="2199"/>
    </location>
    <ligand>
        <name>carbamoyl phosphate</name>
        <dbReference type="ChEBI" id="CHEBI:58228"/>
    </ligand>
</feature>
<feature type="binding site" evidence="5">
    <location>
        <position position="2200"/>
    </location>
    <ligand>
        <name>carbamoyl phosphate</name>
        <dbReference type="ChEBI" id="CHEBI:58228"/>
    </ligand>
</feature>
<feature type="modified residue" description="Phosphoserine" evidence="10">
    <location>
        <position position="1119"/>
    </location>
</feature>
<feature type="modified residue" description="Phosphoserine" evidence="10">
    <location>
        <position position="1881"/>
    </location>
</feature>
<feature type="modified residue" description="Phosphoserine" evidence="10">
    <location>
        <position position="1885"/>
    </location>
</feature>
<feature type="sequence conflict" description="In Ref. 2; CAA57433." evidence="13" ref="2">
    <original>GIC</original>
    <variation>RYF</variation>
    <location>
        <begin position="336"/>
        <end position="338"/>
    </location>
</feature>
<feature type="sequence conflict" description="In Ref. 2; CAA57433." evidence="13" ref="2">
    <original>CAVRA</original>
    <variation>LQFAQ</variation>
    <location>
        <begin position="1035"/>
        <end position="1039"/>
    </location>
</feature>
<feature type="sequence conflict" description="In Ref. 2; CAA57433." evidence="13" ref="2">
    <original>EL</original>
    <variation>DV</variation>
    <location>
        <begin position="1409"/>
        <end position="1410"/>
    </location>
</feature>
<feature type="sequence conflict" description="In Ref. 2; CAA57433." evidence="13" ref="2">
    <original>G</original>
    <variation>E</variation>
    <location>
        <position position="1975"/>
    </location>
</feature>
<feature type="sequence conflict" description="In Ref. 2; CAA57433." evidence="13" ref="2">
    <original>G</original>
    <variation>E</variation>
    <location>
        <position position="2002"/>
    </location>
</feature>
<sequence length="2244" mass="248309">MSGLLPSLSSSFPLVQSEALGMPRTHGPKPSENDPKEPTCSPSPAFYSVNGEMKDYKLMALELEDKSVLQGYSFGADHSVSGELVFQTGMVGYPESLTDPSYRGQILVFTFPTVGNYGVPDRRILDEISGLPKYFESNQIHVAAIIISSYSQNYSHFLAHSSLGEWLKEQGIPGIFGIDTRALTKKIRDQGSMLGRLLIQKDESPINPSSITGLGKDWSTAFEDIPWKNPNTENLTSQVSIKEPKLYEPHPTTAIKKADGKIIRILVIDVGMKYNQIRCFLNRGVELLVVPWDYDFTKETYDGLFISNGPGDPSLMDLVVDRVKRVLESKTVPVFGICFGHQIMARAAGASTTKMKFGNRGHNIPCTCMISGRCYITSQNHGYAVDASSLSNGWKELFVNANDGSNEGIYNTEYPFFSVQFHPESTPGPRDTEFLFDVFIDVVKRSADAKSLQPFKLPGGTIEENRSRHPLVDAKRVLILGSGGLSIGQAGEFDYSGSQAIKALREEGIYTILINPNIATIQTSKGLADKVYFLPVNADFVRKVIKQERPDSIYVTFGGQTALNVGIELKDEFEQLGVKVLGTPIDTIITTEDRELFARAMDEINEKCAKSASASSIEEAIKVSKDISFPVIVRAAYALGGLGSGFADNEAELIDLCTLAFATSPQVLIERSMKGWKEIEYEVVRDAFDNCITVCNMENFDPLGIHTGDSIVVAPSQTLTDEDYNMLRTTAVNVIRHLGVVGECNIQYALNPFTKEYCIIEVNARLSRSSALASKATGYPLAFTAAKLGLNIPLNEVKNSVTKVTCACFEPSLDYVVVKIPRWDLKKFTRVSTQLSSAMKSVGEVMSIGRTFEEAIQKAIRAIDYSNTGFNVKDALMSIDTELQTPSDQRLFAIANAMASGYSVDRIWELTRIDKWFLEKLMGLIRTSQLISKHDISSLPISLLKTAKQLGFADVQIAAFMNSTELAVRRIRTEAGIRPFVKQIDTVAAEFPAFTNYLYTTYNAVEHDIHFNDKGVMVLGSGVYRIGSSVEFDWCAVRAVRTLRDRGVKTIMVNYNPETVSTDYDEADRLYFENIGLETVLDIYEQESSSGIIIAMGGQTANNIALPLHRENVKILGTSPEMIDGAENRFKFSRMLDDIGVDQPKWKELTSFDEADKFCDTVGYPVLVRPSYVLSGAAMNTVYSQSDLHSYLQQAVAINKDHPVVISKYIENAKEIELDAVAREGKMVMHVISEHVENAGVHSGDATLVLPPQDLAPTTIERIVDAAAKIGEALNITGPYNIQFIAKDNEIKVIECNVRASRSFPFVSKVIGVDMISMATDVIMGNPIQPYPDVDLPRDYVAVKVPQFSFSRLSGADPVLGVEMASTGEVACFGHNKFEAYLKAMISTGFRLPKKNILISIGSYKEKAELLPYVKKLYENNYNIFATAGTSDYFMESGVPCKYLADLPAEEANNEYSLSAHLANNMIDMYINLPSNNRYRRPANYISSGYKSRRLAIDYSVPLVTNVKCAKLMIEAICRNLDFSLSTVDFQSSFQTANLPGLINISAFLPEFTSEAVSDYTKECIASGFTMARFLPFSTSSTLADKDSLSAVKKLALDHAHCDYNFSVIASSTNEVTISELTSESGCLFFHFEKDDSGIDHVTAVASHFNVWPDTQTVMTDAKSTTLASLLLLASLHNRRIHITNVSSKDDLNLIVLAKQRSLPVTFDVSVYSLFLNQNDYPGATFLPTADDQVEIWNKLSYIDCFSIGSIPSRLAKFVGNTAFTGFGVREAIPLLLTAVNEGRLTLKDVVDRFYSNPKAIFRLHDQDDSGVQLEVDRSVSWSSKDWTPFNGKKLYGSIQSVQFDGHDVFFDGELNFEHTYGRDYSSASLADKSKATRKVSALMSPGLPHAAPSLAEAFGQAPENKAHPDISLNMTPNFKPSHELVQLINSSPFYRKHIISVHQVTRSDLHVLFAIAHQMRIIVERQGVIDLCYGKLLCTMFFEPSTRTSSSFDAAMQRLGGKVVAVTASASSVNKGESLADTIRTLGCYGDAIVLRHPSIESARIAANFSPVPIINGGNGSKEHPTQAFLDLYTIREELGSVNGLTITFIGDLKYGRTVHSLARLLAFWHVELHLVSPEQLALPDDVKDDIRANGLNFIEHRELTKEVVAQSDVLYCTRVQKERFASVDEYEKLKDSFIVDNSVLASAKSHCIVMHPLPRNREISEEVDFDQRRAAYFRQMRYGLYIRMALLACVMGATEVAN</sequence>
<protein>
    <recommendedName>
        <fullName evidence="13">Multifunctional protein ura1</fullName>
    </recommendedName>
    <alternativeName>
        <fullName>Pyrimidine-specific carbamoyl phosphate synthase-aspartate carbamoyl transferase</fullName>
        <shortName>CPSase-ATCase</shortName>
    </alternativeName>
    <domain>
        <recommendedName>
            <fullName>Glutamine-dependent carbamoyl phosphate synthase</fullName>
            <ecNumber evidence="14">6.3.5.5</ecNumber>
        </recommendedName>
        <alternativeName>
            <fullName>Carbamoyl phosphate synthase P</fullName>
            <shortName>CPS-P</shortName>
            <shortName>CPS-pyr</shortName>
            <shortName>CPSase P</shortName>
        </alternativeName>
        <alternativeName>
            <fullName>Pyrimidine-specific carbamoyl phosphate synthase</fullName>
        </alternativeName>
    </domain>
    <domain>
        <recommendedName>
            <fullName>Glutamine amidotransferase</fullName>
            <shortName>GATase</shortName>
            <shortName>GLNase</shortName>
            <ecNumber>3.5.1.2</ecNumber>
        </recommendedName>
    </domain>
    <domain>
        <recommendedName>
            <fullName>Ammonium-dependent carbamoyl phosphate synthase</fullName>
            <shortName>CPS</shortName>
            <shortName>CPSase</shortName>
            <ecNumber>6.3.4.16</ecNumber>
        </recommendedName>
    </domain>
    <domain>
        <recommendedName>
            <fullName>Aspartate carbamoyltransferase</fullName>
            <shortName>ATCase</shortName>
            <ecNumber evidence="12">2.1.3.2</ecNumber>
        </recommendedName>
        <alternativeName>
            <fullName>Aspartate transcarbamylase</fullName>
        </alternativeName>
    </domain>
</protein>
<name>PYR1_SCHPO</name>
<accession>Q09794</accession>
<evidence type="ECO:0000250" key="1">
    <source>
        <dbReference type="UniProtKB" id="P00968"/>
    </source>
</evidence>
<evidence type="ECO:0000250" key="2">
    <source>
        <dbReference type="UniProtKB" id="P07259"/>
    </source>
</evidence>
<evidence type="ECO:0000250" key="3">
    <source>
        <dbReference type="UniProtKB" id="P08955"/>
    </source>
</evidence>
<evidence type="ECO:0000250" key="4">
    <source>
        <dbReference type="UniProtKB" id="P0A6F1"/>
    </source>
</evidence>
<evidence type="ECO:0000250" key="5">
    <source>
        <dbReference type="UniProtKB" id="P0A786"/>
    </source>
</evidence>
<evidence type="ECO:0000255" key="6">
    <source>
        <dbReference type="PROSITE-ProRule" id="PRU00409"/>
    </source>
</evidence>
<evidence type="ECO:0000255" key="7">
    <source>
        <dbReference type="PROSITE-ProRule" id="PRU00605"/>
    </source>
</evidence>
<evidence type="ECO:0000255" key="8">
    <source>
        <dbReference type="PROSITE-ProRule" id="PRU01202"/>
    </source>
</evidence>
<evidence type="ECO:0000256" key="9">
    <source>
        <dbReference type="SAM" id="MobiDB-lite"/>
    </source>
</evidence>
<evidence type="ECO:0000269" key="10">
    <source>
    </source>
</evidence>
<evidence type="ECO:0000269" key="11">
    <source>
    </source>
</evidence>
<evidence type="ECO:0000269" key="12">
    <source>
    </source>
</evidence>
<evidence type="ECO:0000305" key="13"/>
<evidence type="ECO:0000305" key="14">
    <source>
    </source>
</evidence>
<evidence type="ECO:0000305" key="15">
    <source ref="3"/>
</evidence>
<dbReference type="EC" id="6.3.5.5" evidence="14"/>
<dbReference type="EC" id="3.5.1.2"/>
<dbReference type="EC" id="6.3.4.16"/>
<dbReference type="EC" id="2.1.3.2" evidence="12"/>
<dbReference type="EMBL" id="X81841">
    <property type="protein sequence ID" value="CAA57433.1"/>
    <property type="molecule type" value="mRNA"/>
</dbReference>
<dbReference type="EMBL" id="CU329670">
    <property type="protein sequence ID" value="CAA91130.1"/>
    <property type="molecule type" value="Genomic_DNA"/>
</dbReference>
<dbReference type="PIR" id="S65074">
    <property type="entry name" value="S65074"/>
</dbReference>
<dbReference type="PIR" id="T11616">
    <property type="entry name" value="T11616"/>
</dbReference>
<dbReference type="RefSeq" id="NP_593055.1">
    <property type="nucleotide sequence ID" value="NM_001018453.2"/>
</dbReference>
<dbReference type="SMR" id="Q09794"/>
<dbReference type="BioGRID" id="278044">
    <property type="interactions" value="28"/>
</dbReference>
<dbReference type="DIP" id="DIP-59121N"/>
<dbReference type="FunCoup" id="Q09794">
    <property type="interactions" value="708"/>
</dbReference>
<dbReference type="IntAct" id="Q09794">
    <property type="interactions" value="1"/>
</dbReference>
<dbReference type="STRING" id="284812.Q09794"/>
<dbReference type="MEROPS" id="C26.956"/>
<dbReference type="iPTMnet" id="Q09794"/>
<dbReference type="PaxDb" id="4896-SPAC22G7.06c.1"/>
<dbReference type="EnsemblFungi" id="SPAC22G7.06c.1">
    <property type="protein sequence ID" value="SPAC22G7.06c.1:pep"/>
    <property type="gene ID" value="SPAC22G7.06c"/>
</dbReference>
<dbReference type="GeneID" id="2541544"/>
<dbReference type="KEGG" id="spo:2541544"/>
<dbReference type="PomBase" id="SPAC22G7.06c">
    <property type="gene designation" value="ura1"/>
</dbReference>
<dbReference type="VEuPathDB" id="FungiDB:SPAC22G7.06c"/>
<dbReference type="eggNOG" id="KOG0370">
    <property type="taxonomic scope" value="Eukaryota"/>
</dbReference>
<dbReference type="HOGENOM" id="CLU_000513_2_0_1"/>
<dbReference type="InParanoid" id="Q09794"/>
<dbReference type="OMA" id="WSPFNGK"/>
<dbReference type="PhylomeDB" id="Q09794"/>
<dbReference type="Reactome" id="R-SPO-500753">
    <property type="pathway name" value="Pyrimidine biosynthesis"/>
</dbReference>
<dbReference type="UniPathway" id="UPA00070">
    <property type="reaction ID" value="UER00115"/>
</dbReference>
<dbReference type="UniPathway" id="UPA00070">
    <property type="reaction ID" value="UER00116"/>
</dbReference>
<dbReference type="PRO" id="PR:Q09794"/>
<dbReference type="Proteomes" id="UP000002485">
    <property type="component" value="Chromosome I"/>
</dbReference>
<dbReference type="GO" id="GO:0005737">
    <property type="term" value="C:cytoplasm"/>
    <property type="evidence" value="ECO:0000318"/>
    <property type="project" value="GO_Central"/>
</dbReference>
<dbReference type="GO" id="GO:0005829">
    <property type="term" value="C:cytosol"/>
    <property type="evidence" value="ECO:0007005"/>
    <property type="project" value="PomBase"/>
</dbReference>
<dbReference type="GO" id="GO:0016597">
    <property type="term" value="F:amino acid binding"/>
    <property type="evidence" value="ECO:0007669"/>
    <property type="project" value="InterPro"/>
</dbReference>
<dbReference type="GO" id="GO:0004070">
    <property type="term" value="F:aspartate carbamoyltransferase activity"/>
    <property type="evidence" value="ECO:0000315"/>
    <property type="project" value="PomBase"/>
</dbReference>
<dbReference type="GO" id="GO:0005524">
    <property type="term" value="F:ATP binding"/>
    <property type="evidence" value="ECO:0007669"/>
    <property type="project" value="UniProtKB-KW"/>
</dbReference>
<dbReference type="GO" id="GO:0004087">
    <property type="term" value="F:carbamoyl-phosphate synthase (ammonia) activity"/>
    <property type="evidence" value="ECO:0007669"/>
    <property type="project" value="RHEA"/>
</dbReference>
<dbReference type="GO" id="GO:0004088">
    <property type="term" value="F:carbamoyl-phosphate synthase (glutamine-hydrolyzing) activity"/>
    <property type="evidence" value="ECO:0000316"/>
    <property type="project" value="PomBase"/>
</dbReference>
<dbReference type="GO" id="GO:0004359">
    <property type="term" value="F:glutaminase activity"/>
    <property type="evidence" value="ECO:0007669"/>
    <property type="project" value="RHEA"/>
</dbReference>
<dbReference type="GO" id="GO:0003922">
    <property type="term" value="F:GMP synthase (glutamine-hydrolyzing) activity"/>
    <property type="evidence" value="ECO:0000316"/>
    <property type="project" value="PomBase"/>
</dbReference>
<dbReference type="GO" id="GO:0046872">
    <property type="term" value="F:metal ion binding"/>
    <property type="evidence" value="ECO:0007669"/>
    <property type="project" value="InterPro"/>
</dbReference>
<dbReference type="GO" id="GO:0006207">
    <property type="term" value="P:'de novo' pyrimidine nucleobase biosynthetic process"/>
    <property type="evidence" value="ECO:0000316"/>
    <property type="project" value="PomBase"/>
</dbReference>
<dbReference type="GO" id="GO:0044205">
    <property type="term" value="P:'de novo' UMP biosynthetic process"/>
    <property type="evidence" value="ECO:0007669"/>
    <property type="project" value="UniProtKB-UniPathway"/>
</dbReference>
<dbReference type="GO" id="GO:0006541">
    <property type="term" value="P:glutamine metabolic process"/>
    <property type="evidence" value="ECO:0000316"/>
    <property type="project" value="PomBase"/>
</dbReference>
<dbReference type="CDD" id="cd01316">
    <property type="entry name" value="CAD_DHOase"/>
    <property type="match status" value="1"/>
</dbReference>
<dbReference type="CDD" id="cd01744">
    <property type="entry name" value="GATase1_CPSase"/>
    <property type="match status" value="1"/>
</dbReference>
<dbReference type="CDD" id="cd01423">
    <property type="entry name" value="MGS_CPS_I_III"/>
    <property type="match status" value="1"/>
</dbReference>
<dbReference type="FunFam" id="3.40.50.1370:FF:000002">
    <property type="entry name" value="Aspartate carbamoyltransferase 2"/>
    <property type="match status" value="1"/>
</dbReference>
<dbReference type="FunFam" id="3.40.50.880:FF:000025">
    <property type="entry name" value="Bifunctional pyrimidine biosynthesis protein"/>
    <property type="match status" value="1"/>
</dbReference>
<dbReference type="FunFam" id="3.40.50.1370:FF:000005">
    <property type="entry name" value="CAD protein-like isoform X1"/>
    <property type="match status" value="1"/>
</dbReference>
<dbReference type="FunFam" id="3.40.50.1380:FF:000005">
    <property type="entry name" value="CAD protein-like isoform X1"/>
    <property type="match status" value="1"/>
</dbReference>
<dbReference type="FunFam" id="3.40.50.20:FF:000011">
    <property type="entry name" value="CAD protein-like isoform X1"/>
    <property type="match status" value="1"/>
</dbReference>
<dbReference type="FunFam" id="3.30.470.20:FF:000004">
    <property type="entry name" value="Carbamoyl-phosphate synthase (glutamine-hydrolyzing)"/>
    <property type="match status" value="1"/>
</dbReference>
<dbReference type="FunFam" id="3.50.30.20:FF:000002">
    <property type="entry name" value="Carbamoyl-phosphate synthase 1, mitochondrial"/>
    <property type="match status" value="1"/>
</dbReference>
<dbReference type="FunFam" id="1.10.1030.10:FF:000001">
    <property type="entry name" value="Carbamoyl-phosphate synthase large chain"/>
    <property type="match status" value="1"/>
</dbReference>
<dbReference type="FunFam" id="3.20.20.140:FF:000036">
    <property type="entry name" value="Carbamoyl-phosphate synthase large chain"/>
    <property type="match status" value="1"/>
</dbReference>
<dbReference type="FunFam" id="3.30.1490.20:FF:000001">
    <property type="entry name" value="Carbamoyl-phosphate synthase large chain"/>
    <property type="match status" value="1"/>
</dbReference>
<dbReference type="FunFam" id="3.30.470.20:FF:000001">
    <property type="entry name" value="Carbamoyl-phosphate synthase large chain"/>
    <property type="match status" value="1"/>
</dbReference>
<dbReference type="FunFam" id="3.40.50.20:FF:000002">
    <property type="entry name" value="Carbamoyl-phosphate synthase large chain"/>
    <property type="match status" value="1"/>
</dbReference>
<dbReference type="Gene3D" id="3.40.50.20">
    <property type="match status" value="2"/>
</dbReference>
<dbReference type="Gene3D" id="3.40.50.880">
    <property type="match status" value="1"/>
</dbReference>
<dbReference type="Gene3D" id="3.40.50.1370">
    <property type="entry name" value="Aspartate/ornithine carbamoyltransferase"/>
    <property type="match status" value="2"/>
</dbReference>
<dbReference type="Gene3D" id="3.30.1490.20">
    <property type="entry name" value="ATP-grasp fold, A domain"/>
    <property type="match status" value="1"/>
</dbReference>
<dbReference type="Gene3D" id="3.30.470.20">
    <property type="entry name" value="ATP-grasp fold, B domain"/>
    <property type="match status" value="2"/>
</dbReference>
<dbReference type="Gene3D" id="3.50.30.20">
    <property type="entry name" value="Carbamoyl-phosphate synthase small subunit, N-terminal domain"/>
    <property type="match status" value="1"/>
</dbReference>
<dbReference type="Gene3D" id="1.10.1030.10">
    <property type="entry name" value="Carbamoyl-phosphate synthetase, large subunit oligomerisation domain"/>
    <property type="match status" value="1"/>
</dbReference>
<dbReference type="Gene3D" id="3.20.20.140">
    <property type="entry name" value="Metal-dependent hydrolases"/>
    <property type="match status" value="1"/>
</dbReference>
<dbReference type="Gene3D" id="3.40.50.1380">
    <property type="entry name" value="Methylglyoxal synthase-like domain"/>
    <property type="match status" value="1"/>
</dbReference>
<dbReference type="HAMAP" id="MF_00001">
    <property type="entry name" value="Asp_carb_tr"/>
    <property type="match status" value="1"/>
</dbReference>
<dbReference type="HAMAP" id="MF_01209">
    <property type="entry name" value="CPSase_S_chain"/>
    <property type="match status" value="1"/>
</dbReference>
<dbReference type="InterPro" id="IPR006132">
    <property type="entry name" value="Asp/Orn_carbamoyltranf_P-bd"/>
</dbReference>
<dbReference type="InterPro" id="IPR006130">
    <property type="entry name" value="Asp/Orn_carbamoylTrfase"/>
</dbReference>
<dbReference type="InterPro" id="IPR036901">
    <property type="entry name" value="Asp/Orn_carbamoylTrfase_sf"/>
</dbReference>
<dbReference type="InterPro" id="IPR002082">
    <property type="entry name" value="Asp_carbamoyltransf"/>
</dbReference>
<dbReference type="InterPro" id="IPR006131">
    <property type="entry name" value="Asp_carbamoyltransf_Asp/Orn-bd"/>
</dbReference>
<dbReference type="InterPro" id="IPR011761">
    <property type="entry name" value="ATP-grasp"/>
</dbReference>
<dbReference type="InterPro" id="IPR013815">
    <property type="entry name" value="ATP_grasp_subdomain_1"/>
</dbReference>
<dbReference type="InterPro" id="IPR006275">
    <property type="entry name" value="CarbamoylP_synth_lsu"/>
</dbReference>
<dbReference type="InterPro" id="IPR005480">
    <property type="entry name" value="CarbamoylP_synth_lsu_oligo"/>
</dbReference>
<dbReference type="InterPro" id="IPR036897">
    <property type="entry name" value="CarbamoylP_synth_lsu_oligo_sf"/>
</dbReference>
<dbReference type="InterPro" id="IPR006274">
    <property type="entry name" value="CarbamoylP_synth_ssu"/>
</dbReference>
<dbReference type="InterPro" id="IPR002474">
    <property type="entry name" value="CarbamoylP_synth_ssu_N"/>
</dbReference>
<dbReference type="InterPro" id="IPR036480">
    <property type="entry name" value="CarbP_synth_ssu_N_sf"/>
</dbReference>
<dbReference type="InterPro" id="IPR005479">
    <property type="entry name" value="CbamoylP_synth_lsu-like_ATP-bd"/>
</dbReference>
<dbReference type="InterPro" id="IPR005483">
    <property type="entry name" value="CbamoylP_synth_lsu_CPSase_dom"/>
</dbReference>
<dbReference type="InterPro" id="IPR029062">
    <property type="entry name" value="Class_I_gatase-like"/>
</dbReference>
<dbReference type="InterPro" id="IPR035686">
    <property type="entry name" value="CPSase_GATase1"/>
</dbReference>
<dbReference type="InterPro" id="IPR017926">
    <property type="entry name" value="GATASE"/>
</dbReference>
<dbReference type="InterPro" id="IPR011059">
    <property type="entry name" value="Metal-dep_hydrolase_composite"/>
</dbReference>
<dbReference type="InterPro" id="IPR032466">
    <property type="entry name" value="Metal_Hydrolase"/>
</dbReference>
<dbReference type="InterPro" id="IPR011607">
    <property type="entry name" value="MGS-like_dom"/>
</dbReference>
<dbReference type="InterPro" id="IPR036914">
    <property type="entry name" value="MGS-like_dom_sf"/>
</dbReference>
<dbReference type="InterPro" id="IPR016185">
    <property type="entry name" value="PreATP-grasp_dom_sf"/>
</dbReference>
<dbReference type="NCBIfam" id="TIGR00670">
    <property type="entry name" value="asp_carb_tr"/>
    <property type="match status" value="1"/>
</dbReference>
<dbReference type="NCBIfam" id="TIGR01369">
    <property type="entry name" value="CPSaseII_lrg"/>
    <property type="match status" value="1"/>
</dbReference>
<dbReference type="NCBIfam" id="TIGR01368">
    <property type="entry name" value="CPSaseIIsmall"/>
    <property type="match status" value="1"/>
</dbReference>
<dbReference type="NCBIfam" id="NF002032">
    <property type="entry name" value="PRK00856.1"/>
    <property type="match status" value="1"/>
</dbReference>
<dbReference type="NCBIfam" id="NF003671">
    <property type="entry name" value="PRK05294.1"/>
    <property type="match status" value="1"/>
</dbReference>
<dbReference type="NCBIfam" id="NF009455">
    <property type="entry name" value="PRK12815.1"/>
    <property type="match status" value="1"/>
</dbReference>
<dbReference type="NCBIfam" id="NF009475">
    <property type="entry name" value="PRK12838.1"/>
    <property type="match status" value="1"/>
</dbReference>
<dbReference type="PANTHER" id="PTHR11405:SF4">
    <property type="entry name" value="CARBAMOYL-PHOSPHATE SYNTHASE ARGININE-SPECIFIC SMALL CHAIN"/>
    <property type="match status" value="1"/>
</dbReference>
<dbReference type="PANTHER" id="PTHR11405">
    <property type="entry name" value="CARBAMOYLTRANSFERASE FAMILY MEMBER"/>
    <property type="match status" value="1"/>
</dbReference>
<dbReference type="Pfam" id="PF02786">
    <property type="entry name" value="CPSase_L_D2"/>
    <property type="match status" value="2"/>
</dbReference>
<dbReference type="Pfam" id="PF02787">
    <property type="entry name" value="CPSase_L_D3"/>
    <property type="match status" value="1"/>
</dbReference>
<dbReference type="Pfam" id="PF00988">
    <property type="entry name" value="CPSase_sm_chain"/>
    <property type="match status" value="1"/>
</dbReference>
<dbReference type="Pfam" id="PF00117">
    <property type="entry name" value="GATase"/>
    <property type="match status" value="1"/>
</dbReference>
<dbReference type="Pfam" id="PF02142">
    <property type="entry name" value="MGS"/>
    <property type="match status" value="1"/>
</dbReference>
<dbReference type="Pfam" id="PF00185">
    <property type="entry name" value="OTCace"/>
    <property type="match status" value="1"/>
</dbReference>
<dbReference type="Pfam" id="PF02729">
    <property type="entry name" value="OTCace_N"/>
    <property type="match status" value="1"/>
</dbReference>
<dbReference type="PRINTS" id="PR00100">
    <property type="entry name" value="AOTCASE"/>
</dbReference>
<dbReference type="PRINTS" id="PR00101">
    <property type="entry name" value="ATCASE"/>
</dbReference>
<dbReference type="PRINTS" id="PR00098">
    <property type="entry name" value="CPSASE"/>
</dbReference>
<dbReference type="PRINTS" id="PR00099">
    <property type="entry name" value="CPSGATASE"/>
</dbReference>
<dbReference type="SMART" id="SM01096">
    <property type="entry name" value="CPSase_L_D3"/>
    <property type="match status" value="1"/>
</dbReference>
<dbReference type="SMART" id="SM01097">
    <property type="entry name" value="CPSase_sm_chain"/>
    <property type="match status" value="1"/>
</dbReference>
<dbReference type="SMART" id="SM00851">
    <property type="entry name" value="MGS"/>
    <property type="match status" value="1"/>
</dbReference>
<dbReference type="SUPFAM" id="SSF53671">
    <property type="entry name" value="Aspartate/ornithine carbamoyltransferase"/>
    <property type="match status" value="1"/>
</dbReference>
<dbReference type="SUPFAM" id="SSF48108">
    <property type="entry name" value="Carbamoyl phosphate synthetase, large subunit connection domain"/>
    <property type="match status" value="1"/>
</dbReference>
<dbReference type="SUPFAM" id="SSF52021">
    <property type="entry name" value="Carbamoyl phosphate synthetase, small subunit N-terminal domain"/>
    <property type="match status" value="1"/>
</dbReference>
<dbReference type="SUPFAM" id="SSF52317">
    <property type="entry name" value="Class I glutamine amidotransferase-like"/>
    <property type="match status" value="1"/>
</dbReference>
<dbReference type="SUPFAM" id="SSF51338">
    <property type="entry name" value="Composite domain of metallo-dependent hydrolases"/>
    <property type="match status" value="1"/>
</dbReference>
<dbReference type="SUPFAM" id="SSF56059">
    <property type="entry name" value="Glutathione synthetase ATP-binding domain-like"/>
    <property type="match status" value="2"/>
</dbReference>
<dbReference type="SUPFAM" id="SSF51556">
    <property type="entry name" value="Metallo-dependent hydrolases"/>
    <property type="match status" value="1"/>
</dbReference>
<dbReference type="SUPFAM" id="SSF52335">
    <property type="entry name" value="Methylglyoxal synthase-like"/>
    <property type="match status" value="1"/>
</dbReference>
<dbReference type="SUPFAM" id="SSF52440">
    <property type="entry name" value="PreATP-grasp domain"/>
    <property type="match status" value="2"/>
</dbReference>
<dbReference type="PROSITE" id="PS50975">
    <property type="entry name" value="ATP_GRASP"/>
    <property type="match status" value="2"/>
</dbReference>
<dbReference type="PROSITE" id="PS00097">
    <property type="entry name" value="CARBAMOYLTRANSFERASE"/>
    <property type="match status" value="1"/>
</dbReference>
<dbReference type="PROSITE" id="PS00866">
    <property type="entry name" value="CPSASE_1"/>
    <property type="match status" value="2"/>
</dbReference>
<dbReference type="PROSITE" id="PS00867">
    <property type="entry name" value="CPSASE_2"/>
    <property type="match status" value="2"/>
</dbReference>
<dbReference type="PROSITE" id="PS51273">
    <property type="entry name" value="GATASE_TYPE_1"/>
    <property type="match status" value="1"/>
</dbReference>
<dbReference type="PROSITE" id="PS51855">
    <property type="entry name" value="MGS"/>
    <property type="match status" value="1"/>
</dbReference>
<comment type="function">
    <text evidence="2 12">Multifunctional protein that encodes the first 2 enzymatic activities of the de novo pyrimidine pathway: carbamoylphosphate synthetase (CPSase; EC 6.3.5.5) and aspartate transcarbamylase (ATCase; EC 2.1.3.2) (PubMed:8590465). The CPSase-function is accomplished in 2 steps, by a glutamine-dependent amidotransferase activity (GATase) that binds and cleaves glutamine to produce ammonia, followed by an ammonium-dependent carbamoyl phosphate synthetase, which reacts with the ammonia, hydrogencarbonate and ATP to form carbamoyl phosphate. The endogenously produced carbamoyl phosphate is sequestered and channeled to the ATCase active site. ATCase then catalyzes the formation of carbamoyl-L-aspartate from L-aspartate and carbamoyl phosphate (By similarity).</text>
</comment>
<comment type="catalytic activity">
    <reaction evidence="14">
        <text>hydrogencarbonate + L-glutamine + 2 ATP + H2O = carbamoyl phosphate + L-glutamate + 2 ADP + phosphate + 2 H(+)</text>
        <dbReference type="Rhea" id="RHEA:18633"/>
        <dbReference type="ChEBI" id="CHEBI:15377"/>
        <dbReference type="ChEBI" id="CHEBI:15378"/>
        <dbReference type="ChEBI" id="CHEBI:17544"/>
        <dbReference type="ChEBI" id="CHEBI:29985"/>
        <dbReference type="ChEBI" id="CHEBI:30616"/>
        <dbReference type="ChEBI" id="CHEBI:43474"/>
        <dbReference type="ChEBI" id="CHEBI:58228"/>
        <dbReference type="ChEBI" id="CHEBI:58359"/>
        <dbReference type="ChEBI" id="CHEBI:456216"/>
        <dbReference type="EC" id="6.3.5.5"/>
    </reaction>
</comment>
<comment type="catalytic activity">
    <reaction evidence="14">
        <text>L-glutamine + H2O = L-glutamate + NH4(+)</text>
        <dbReference type="Rhea" id="RHEA:15889"/>
        <dbReference type="ChEBI" id="CHEBI:15377"/>
        <dbReference type="ChEBI" id="CHEBI:28938"/>
        <dbReference type="ChEBI" id="CHEBI:29985"/>
        <dbReference type="ChEBI" id="CHEBI:58359"/>
        <dbReference type="EC" id="3.5.1.2"/>
    </reaction>
</comment>
<comment type="catalytic activity">
    <reaction evidence="14">
        <text>hydrogencarbonate + NH4(+) + 2 ATP = carbamoyl phosphate + 2 ADP + phosphate + 2 H(+)</text>
        <dbReference type="Rhea" id="RHEA:18029"/>
        <dbReference type="ChEBI" id="CHEBI:15378"/>
        <dbReference type="ChEBI" id="CHEBI:17544"/>
        <dbReference type="ChEBI" id="CHEBI:28938"/>
        <dbReference type="ChEBI" id="CHEBI:30616"/>
        <dbReference type="ChEBI" id="CHEBI:43474"/>
        <dbReference type="ChEBI" id="CHEBI:58228"/>
        <dbReference type="ChEBI" id="CHEBI:456216"/>
        <dbReference type="EC" id="6.3.4.16"/>
    </reaction>
</comment>
<comment type="catalytic activity">
    <reaction evidence="12">
        <text>carbamoyl phosphate + L-aspartate = N-carbamoyl-L-aspartate + phosphate + H(+)</text>
        <dbReference type="Rhea" id="RHEA:20013"/>
        <dbReference type="ChEBI" id="CHEBI:15378"/>
        <dbReference type="ChEBI" id="CHEBI:29991"/>
        <dbReference type="ChEBI" id="CHEBI:32814"/>
        <dbReference type="ChEBI" id="CHEBI:43474"/>
        <dbReference type="ChEBI" id="CHEBI:58228"/>
        <dbReference type="EC" id="2.1.3.2"/>
    </reaction>
</comment>
<comment type="cofactor">
    <cofactor evidence="6">
        <name>Mg(2+)</name>
        <dbReference type="ChEBI" id="CHEBI:18420"/>
    </cofactor>
    <cofactor evidence="6">
        <name>Mn(2+)</name>
        <dbReference type="ChEBI" id="CHEBI:29035"/>
    </cofactor>
    <text evidence="6">Binds 4 Mg(2+) or Mn(2+) ions per subunit.</text>
</comment>
<comment type="activity regulation">
    <text evidence="12">Both CPSase and ATCase activities are feedback inhibited by the end product UTP.</text>
</comment>
<comment type="pathway">
    <text evidence="14">Pyrimidine metabolism; UMP biosynthesis via de novo pathway; (S)-dihydroorotate from bicarbonate: step 1/3.</text>
</comment>
<comment type="pathway">
    <text evidence="14">Pyrimidine metabolism; UMP biosynthesis via de novo pathway; (S)-dihydroorotate from bicarbonate: step 2/3.</text>
</comment>
<comment type="domain">
    <text evidence="11 12">The DHOase domain is defective. The third step of the de novo pyrimidine pathway, dihydroorotase (DHOase) is encoded by the ura2 gene which is both physically and genetically independent of the ura1 gene.</text>
</comment>
<comment type="miscellaneous">
    <text evidence="2">GATase (glutamine amidotransferase) and CPSase (carbamoyl phosphate synthase) form together the glutamine-dependent CPSase (GD-CPSase) (EC 6.3.5.5).</text>
</comment>
<comment type="miscellaneous">
    <text evidence="15">In S.pombe, this enzyme is synthesized by 2 pathway-specific (arginine and pyrimidine) genes under separate control. One is linked to the arginine pathway and is designated CPSase A (arg5-arg4), it is localized to mitochondria and repressed by arginine. A second one, CPSase P, is part of a multifunctional protein (ura1) encoding 3 enzymatic activities of the pyrimidine pathway (GATase, CPSase, and ATCase); it is localized to the cytoplasm and feedback inhibited and repressed by pyrimidines. The carbamoyl phosphate synthesized by each synthase is channeled to its respective pathway, in contrast to Saccharomyces cerevisiae, in which the 2 synthases are localized to the cytoplasm and appear to contribute to the formation of a single cellular pool of carbamoyl phosphate.</text>
</comment>
<comment type="similarity">
    <text evidence="13">In the N-terminal section; belongs to the CarA family.</text>
</comment>
<comment type="similarity">
    <text evidence="13">In the 2nd section; belongs to the CarB family.</text>
</comment>
<comment type="similarity">
    <text evidence="13">In the 3rd section; belongs to the metallo-dependent hydrolases superfamily. DHOase family. CAD subfamily.</text>
</comment>
<comment type="similarity">
    <text evidence="13">In the C-terminal section; belongs to the aspartate/ornithine carbamoyltransferase superfamily. ATCase family.</text>
</comment>
<organism>
    <name type="scientific">Schizosaccharomyces pombe (strain 972 / ATCC 24843)</name>
    <name type="common">Fission yeast</name>
    <dbReference type="NCBI Taxonomy" id="284812"/>
    <lineage>
        <taxon>Eukaryota</taxon>
        <taxon>Fungi</taxon>
        <taxon>Dikarya</taxon>
        <taxon>Ascomycota</taxon>
        <taxon>Taphrinomycotina</taxon>
        <taxon>Schizosaccharomycetes</taxon>
        <taxon>Schizosaccharomycetales</taxon>
        <taxon>Schizosaccharomycetaceae</taxon>
        <taxon>Schizosaccharomyces</taxon>
    </lineage>
</organism>
<keyword id="KW-0067">ATP-binding</keyword>
<keyword id="KW-0378">Hydrolase</keyword>
<keyword id="KW-0436">Ligase</keyword>
<keyword id="KW-0511">Multifunctional enzyme</keyword>
<keyword id="KW-0547">Nucleotide-binding</keyword>
<keyword id="KW-0597">Phosphoprotein</keyword>
<keyword id="KW-0665">Pyrimidine biosynthesis</keyword>
<keyword id="KW-1185">Reference proteome</keyword>
<keyword id="KW-0677">Repeat</keyword>
<keyword id="KW-0808">Transferase</keyword>